<comment type="function">
    <text evidence="2">This polymerase possesses two enzymatic activities: DNA synthesis (polymerase) and an exonucleolytic activity that degrades single-stranded DNA in the 3'- to 5'-direction.</text>
</comment>
<comment type="catalytic activity">
    <reaction evidence="2">
        <text>DNA(n) + a 2'-deoxyribonucleoside 5'-triphosphate = DNA(n+1) + diphosphate</text>
        <dbReference type="Rhea" id="RHEA:22508"/>
        <dbReference type="Rhea" id="RHEA-COMP:17339"/>
        <dbReference type="Rhea" id="RHEA-COMP:17340"/>
        <dbReference type="ChEBI" id="CHEBI:33019"/>
        <dbReference type="ChEBI" id="CHEBI:61560"/>
        <dbReference type="ChEBI" id="CHEBI:173112"/>
        <dbReference type="EC" id="2.7.7.7"/>
    </reaction>
</comment>
<comment type="cofactor">
    <cofactor evidence="1">
        <name>[4Fe-4S] cluster</name>
        <dbReference type="ChEBI" id="CHEBI:49883"/>
    </cofactor>
    <text evidence="1">Binds 1 [4Fe-4S] cluster.</text>
</comment>
<comment type="cofactor">
    <cofactor evidence="2">
        <name>Mg(2+)</name>
        <dbReference type="ChEBI" id="CHEBI:18420"/>
    </cofactor>
    <text evidence="2">May also use Mn(2+).</text>
</comment>
<comment type="activity regulation">
    <text evidence="2">The small regulatory subunit delta and PCNA1 increase POLD catalytic activity.</text>
</comment>
<comment type="subunit">
    <text evidence="7">Heterodimer composed of a catalytic subunit POLD and a small regulatory subunit.</text>
</comment>
<comment type="subcellular location">
    <subcellularLocation>
        <location evidence="1">Nucleus</location>
    </subcellularLocation>
</comment>
<comment type="developmental stage">
    <text evidence="3">Expressed during the asexual blood stage specifically in trophozoites and schizonts (at protein level).</text>
</comment>
<comment type="domain">
    <text evidence="1">The CysB motif binds 1 4Fe-4S cluster and is required for the formation of polymerase complexes.</text>
</comment>
<comment type="miscellaneous">
    <text>In eukaryotes there are five DNA polymerases: alpha, beta, gamma, delta, and epsilon which are responsible for different reactions of DNA synthesis.</text>
</comment>
<comment type="similarity">
    <text evidence="6">Belongs to the DNA polymerase type-B family.</text>
</comment>
<evidence type="ECO:0000250" key="1">
    <source>
        <dbReference type="UniProtKB" id="P15436"/>
    </source>
</evidence>
<evidence type="ECO:0000269" key="2">
    <source>
    </source>
</evidence>
<evidence type="ECO:0000269" key="3">
    <source>
    </source>
</evidence>
<evidence type="ECO:0000303" key="4">
    <source>
    </source>
</evidence>
<evidence type="ECO:0000303" key="5">
    <source>
    </source>
</evidence>
<evidence type="ECO:0000305" key="6"/>
<evidence type="ECO:0000305" key="7">
    <source>
    </source>
</evidence>
<protein>
    <recommendedName>
        <fullName evidence="4">DNA polymerase delta catalytic subunit</fullName>
        <shortName evidence="5">PfPoldelta</shortName>
        <ecNumber evidence="2">2.7.7.7</ecNumber>
    </recommendedName>
    <alternativeName>
        <fullName evidence="6">3'-5' exodeoxyribonuclease</fullName>
        <ecNumber evidence="2">3.1.11.-</ecNumber>
    </alternativeName>
</protein>
<name>DPOD_PLAFK</name>
<reference key="1">
    <citation type="journal article" date="1991" name="Nucleic Acids Res.">
        <title>DNA polymerase delta: gene sequences from Plasmodium falciparum indicate that this enzyme is more highly conserved than DNA polymerase alpha.</title>
        <authorList>
            <person name="Ridley R.G."/>
            <person name="White J.H."/>
            <person name="McAleese S.M."/>
            <person name="Goman M."/>
            <person name="Alano P."/>
            <person name="Devries E."/>
            <person name="Kilbey B.J."/>
        </authorList>
    </citation>
    <scope>NUCLEOTIDE SEQUENCE [GENOMIC DNA]</scope>
</reference>
<reference key="2">
    <citation type="journal article" date="1991" name="Mol. Biochem. Parasitol.">
        <title>The primary structure of Plasmodium falciparum DNA polymerase delta is similar to drug sensitive delta-like viral DNA polymerases.</title>
        <authorList>
            <person name="Fox B.A."/>
            <person name="Bzik D.J."/>
        </authorList>
    </citation>
    <scope>NUCLEOTIDE SEQUENCE [GENOMIC DNA]</scope>
</reference>
<reference key="3">
    <citation type="journal article" date="1996" name="Mol. Biochem. Parasitol.">
        <title>Stage specific expression of proliferating cell nuclear antigen and DNA polymerase delta from Plasmodium falciparum.</title>
        <authorList>
            <person name="Horrocks P."/>
            <person name="Jackson M."/>
            <person name="Cheesman S."/>
            <person name="White J.H."/>
            <person name="Kilbey B.J."/>
        </authorList>
    </citation>
    <scope>DEVELOPMENTAL STAGE</scope>
</reference>
<reference key="4">
    <citation type="journal article" date="2016" name="Malar. J.">
        <title>Biochemical and functional characterization of Plasmodium falciparum DNA polymerase delta.</title>
        <authorList>
            <person name="Vasuvat J."/>
            <person name="Montree A."/>
            <person name="Moonsom S."/>
            <person name="Leartsakulpanich U."/>
            <person name="Petmitr S."/>
            <person name="Focher F."/>
            <person name="Wright G.E."/>
            <person name="Chavalitshewinkoon-Petmitr P."/>
        </authorList>
    </citation>
    <scope>FUNCTION</scope>
    <scope>CATALYTIC ACTIVITY</scope>
    <scope>COFACTOR</scope>
    <scope>ACTIVITY REGULATION</scope>
    <scope>SUBUNIT</scope>
</reference>
<accession>P30315</accession>
<feature type="chain" id="PRO_0000046448" description="DNA polymerase delta catalytic subunit">
    <location>
        <begin position="1"/>
        <end position="1094"/>
    </location>
</feature>
<feature type="zinc finger region" description="CysA-type" evidence="1">
    <location>
        <begin position="1003"/>
        <end position="1019"/>
    </location>
</feature>
<feature type="short sequence motif" description="CysB motif" evidence="1">
    <location>
        <begin position="1049"/>
        <end position="1067"/>
    </location>
</feature>
<feature type="binding site" evidence="1">
    <location>
        <position position="1003"/>
    </location>
    <ligand>
        <name>Zn(2+)</name>
        <dbReference type="ChEBI" id="CHEBI:29105"/>
    </ligand>
</feature>
<feature type="binding site" evidence="1">
    <location>
        <position position="1006"/>
    </location>
    <ligand>
        <name>Zn(2+)</name>
        <dbReference type="ChEBI" id="CHEBI:29105"/>
    </ligand>
</feature>
<feature type="binding site" evidence="1">
    <location>
        <position position="1016"/>
    </location>
    <ligand>
        <name>Zn(2+)</name>
        <dbReference type="ChEBI" id="CHEBI:29105"/>
    </ligand>
</feature>
<feature type="binding site" evidence="1">
    <location>
        <position position="1019"/>
    </location>
    <ligand>
        <name>Zn(2+)</name>
        <dbReference type="ChEBI" id="CHEBI:29105"/>
    </ligand>
</feature>
<feature type="binding site" evidence="1">
    <location>
        <position position="1049"/>
    </location>
    <ligand>
        <name>[4Fe-4S] cluster</name>
        <dbReference type="ChEBI" id="CHEBI:49883"/>
    </ligand>
</feature>
<feature type="binding site" evidence="1">
    <location>
        <position position="1052"/>
    </location>
    <ligand>
        <name>[4Fe-4S] cluster</name>
        <dbReference type="ChEBI" id="CHEBI:49883"/>
    </ligand>
</feature>
<feature type="binding site" evidence="1">
    <location>
        <position position="1062"/>
    </location>
    <ligand>
        <name>[4Fe-4S] cluster</name>
        <dbReference type="ChEBI" id="CHEBI:49883"/>
    </ligand>
</feature>
<feature type="binding site" evidence="1">
    <location>
        <position position="1067"/>
    </location>
    <ligand>
        <name>[4Fe-4S] cluster</name>
        <dbReference type="ChEBI" id="CHEBI:49883"/>
    </ligand>
</feature>
<proteinExistence type="evidence at protein level"/>
<gene>
    <name type="primary">POLD</name>
</gene>
<sequence>MEELKTCPFTNVIPYGLLYDKLKKEKNNDVPENYVIEEFDKLLKNYERPNVYDEIGNATFKNDEDLITFQIDLDYTVENIFKNMIYNESGSNNSILNDIYMPYRILLSKDKNYVSVPIIRIYSLRKDGCSVLINVHNFFPYFYVEKPDDFDNEDLIKLEMLMNENLNLNSQYKIYEKKILKIEIVKTESLMYFKKNGKKDFLKITVLLPKMVPSLKKYFEGIVHVNNKSIGGIVYEANLPFILRYIIDHKITGSSWINCKKGHYYIRNKNKKISNCTFEIDISYEHVEPITLENEYQQIPKLRILSFDIECIKLDGKGFPEAKNDPIIQISSILYFQGEPIDNCTKFIFTLLECASIPGSNVIWFNDEKTLLEAWNEFIIRIDPDFLTGYNIINFDLPYILNRGTALNLKKLKFLGRIKNVASTVKDSSFSSKQFGTHETKEINIFGRIQFDVYDLIKRDYKLKSYTLNYVSFEFLKEQKEDVHYSIMNDLQNESPESRKRIATYCIKDGVLPLRLIDKLLFIYNYVEMARVTGTPFVYLLTRGQQIKVTSQLYRKCKELNYVIPSTYMKVNTNEKYEGATVLEPIKGYYIEPISTLDFASLYPSIMIAHNLCYSTLIKSNHEVSDLQNDDITTIQGKNNLKFVKKNVKKGILPLIVEELIEARKKVKLLIKNEKNNITKMVLNGRQLALKISANSVYGYTGASSGGQLPCLEVAVSITTLGRSMIEKTKERVESFYCKSNGYEHNSTVIYGDTDSVMVKFGTNNIEEAMTLGKDAAERISKEFLSPIKLEFEKVYCPYLLLNKKRYAGLLYTNPNKHDKMDCKGIETVRRDFCILIQQMMETVLNKLLIEKNLNSAIEYTKSKIKELLTNNIDMSLLVVTKSLGKTDYETRLPHVELAKKLKQRDSATAPNVGDRVSYIIVKGVKGQAQYERAEDPLYVLDNNLAIDYNHYLDAIKSPLSRIFEVIMQNSDSLFSGDHTRHKTILTSSQTALSKFLKKSVRCIGCNSSIKKPPLCNHCKENKEFSIYMQKIKDFKNKQNEFFQLWTECQRCQGNLHVDVICMNRDCPIFYRRAKIKKDIANLQEQVTSLRMDW</sequence>
<organism>
    <name type="scientific">Plasmodium falciparum (isolate K1 / Thailand)</name>
    <dbReference type="NCBI Taxonomy" id="5839"/>
    <lineage>
        <taxon>Eukaryota</taxon>
        <taxon>Sar</taxon>
        <taxon>Alveolata</taxon>
        <taxon>Apicomplexa</taxon>
        <taxon>Aconoidasida</taxon>
        <taxon>Haemosporida</taxon>
        <taxon>Plasmodiidae</taxon>
        <taxon>Plasmodium</taxon>
        <taxon>Plasmodium (Laverania)</taxon>
    </lineage>
</organism>
<keyword id="KW-0004">4Fe-4S</keyword>
<keyword id="KW-0235">DNA replication</keyword>
<keyword id="KW-0238">DNA-binding</keyword>
<keyword id="KW-0239">DNA-directed DNA polymerase</keyword>
<keyword id="KW-0269">Exonuclease</keyword>
<keyword id="KW-0378">Hydrolase</keyword>
<keyword id="KW-0408">Iron</keyword>
<keyword id="KW-0411">Iron-sulfur</keyword>
<keyword id="KW-0460">Magnesium</keyword>
<keyword id="KW-0479">Metal-binding</keyword>
<keyword id="KW-0540">Nuclease</keyword>
<keyword id="KW-0548">Nucleotidyltransferase</keyword>
<keyword id="KW-0539">Nucleus</keyword>
<keyword id="KW-0808">Transferase</keyword>
<keyword id="KW-0862">Zinc</keyword>
<keyword id="KW-0863">Zinc-finger</keyword>
<dbReference type="EC" id="2.7.7.7" evidence="2"/>
<dbReference type="EC" id="3.1.11.-" evidence="2"/>
<dbReference type="EMBL" id="M64715">
    <property type="protein sequence ID" value="AAA29589.1"/>
    <property type="molecule type" value="Genomic_DNA"/>
</dbReference>
<dbReference type="EMBL" id="X62423">
    <property type="protein sequence ID" value="CAA44289.1"/>
    <property type="molecule type" value="Genomic_DNA"/>
</dbReference>
<dbReference type="EMBL" id="M63941">
    <property type="protein sequence ID" value="AAA29588.1"/>
    <property type="molecule type" value="Genomic_DNA"/>
</dbReference>
<dbReference type="PIR" id="S22573">
    <property type="entry name" value="S22573"/>
</dbReference>
<dbReference type="SMR" id="P30315"/>
<dbReference type="GO" id="GO:0043625">
    <property type="term" value="C:delta DNA polymerase complex"/>
    <property type="evidence" value="ECO:0000314"/>
    <property type="project" value="UniProtKB"/>
</dbReference>
<dbReference type="GO" id="GO:0008296">
    <property type="term" value="F:3'-5'-DNA exonuclease activity"/>
    <property type="evidence" value="ECO:0007669"/>
    <property type="project" value="TreeGrafter"/>
</dbReference>
<dbReference type="GO" id="GO:0051539">
    <property type="term" value="F:4 iron, 4 sulfur cluster binding"/>
    <property type="evidence" value="ECO:0007669"/>
    <property type="project" value="UniProtKB-KW"/>
</dbReference>
<dbReference type="GO" id="GO:0003677">
    <property type="term" value="F:DNA binding"/>
    <property type="evidence" value="ECO:0007669"/>
    <property type="project" value="UniProtKB-KW"/>
</dbReference>
<dbReference type="GO" id="GO:0003887">
    <property type="term" value="F:DNA-directed DNA polymerase activity"/>
    <property type="evidence" value="ECO:0000314"/>
    <property type="project" value="UniProtKB"/>
</dbReference>
<dbReference type="GO" id="GO:0000166">
    <property type="term" value="F:nucleotide binding"/>
    <property type="evidence" value="ECO:0007669"/>
    <property type="project" value="InterPro"/>
</dbReference>
<dbReference type="GO" id="GO:0008270">
    <property type="term" value="F:zinc ion binding"/>
    <property type="evidence" value="ECO:0007669"/>
    <property type="project" value="UniProtKB-KW"/>
</dbReference>
<dbReference type="GO" id="GO:0006287">
    <property type="term" value="P:base-excision repair, gap-filling"/>
    <property type="evidence" value="ECO:0007669"/>
    <property type="project" value="TreeGrafter"/>
</dbReference>
<dbReference type="GO" id="GO:0045004">
    <property type="term" value="P:DNA replication proofreading"/>
    <property type="evidence" value="ECO:0007669"/>
    <property type="project" value="TreeGrafter"/>
</dbReference>
<dbReference type="GO" id="GO:0006297">
    <property type="term" value="P:nucleotide-excision repair, DNA gap filling"/>
    <property type="evidence" value="ECO:0007669"/>
    <property type="project" value="TreeGrafter"/>
</dbReference>
<dbReference type="CDD" id="cd05777">
    <property type="entry name" value="DNA_polB_delta_exo"/>
    <property type="match status" value="1"/>
</dbReference>
<dbReference type="CDD" id="cd05533">
    <property type="entry name" value="POLBc_delta"/>
    <property type="match status" value="1"/>
</dbReference>
<dbReference type="FunFam" id="1.10.132.60:FF:000010">
    <property type="entry name" value="DNA polymerase"/>
    <property type="match status" value="1"/>
</dbReference>
<dbReference type="FunFam" id="3.30.342.10:FF:000011">
    <property type="entry name" value="DNA polymerase"/>
    <property type="match status" value="1"/>
</dbReference>
<dbReference type="FunFam" id="3.30.420.10:FF:000004">
    <property type="entry name" value="DNA polymerase"/>
    <property type="match status" value="1"/>
</dbReference>
<dbReference type="Gene3D" id="1.10.132.60">
    <property type="entry name" value="DNA polymerase family B, C-terminal domain"/>
    <property type="match status" value="1"/>
</dbReference>
<dbReference type="Gene3D" id="3.30.342.10">
    <property type="entry name" value="DNA Polymerase, chain B, domain 1"/>
    <property type="match status" value="1"/>
</dbReference>
<dbReference type="Gene3D" id="1.10.287.690">
    <property type="entry name" value="Helix hairpin bin"/>
    <property type="match status" value="1"/>
</dbReference>
<dbReference type="Gene3D" id="3.90.1600.10">
    <property type="entry name" value="Palm domain of DNA polymerase"/>
    <property type="match status" value="1"/>
</dbReference>
<dbReference type="Gene3D" id="3.30.420.10">
    <property type="entry name" value="Ribonuclease H-like superfamily/Ribonuclease H"/>
    <property type="match status" value="1"/>
</dbReference>
<dbReference type="InterPro" id="IPR006172">
    <property type="entry name" value="DNA-dir_DNA_pol_B"/>
</dbReference>
<dbReference type="InterPro" id="IPR017964">
    <property type="entry name" value="DNA-dir_DNA_pol_B_CS"/>
</dbReference>
<dbReference type="InterPro" id="IPR006133">
    <property type="entry name" value="DNA-dir_DNA_pol_B_exonuc"/>
</dbReference>
<dbReference type="InterPro" id="IPR006134">
    <property type="entry name" value="DNA-dir_DNA_pol_B_multi_dom"/>
</dbReference>
<dbReference type="InterPro" id="IPR043502">
    <property type="entry name" value="DNA/RNA_pol_sf"/>
</dbReference>
<dbReference type="InterPro" id="IPR042087">
    <property type="entry name" value="DNA_pol_B_thumb"/>
</dbReference>
<dbReference type="InterPro" id="IPR023211">
    <property type="entry name" value="DNA_pol_palm_dom_sf"/>
</dbReference>
<dbReference type="InterPro" id="IPR050240">
    <property type="entry name" value="DNA_pol_type-B"/>
</dbReference>
<dbReference type="InterPro" id="IPR056435">
    <property type="entry name" value="DPOD/Z_N"/>
</dbReference>
<dbReference type="InterPro" id="IPR012337">
    <property type="entry name" value="RNaseH-like_sf"/>
</dbReference>
<dbReference type="InterPro" id="IPR036397">
    <property type="entry name" value="RNaseH_sf"/>
</dbReference>
<dbReference type="InterPro" id="IPR025687">
    <property type="entry name" value="Znf-C4pol"/>
</dbReference>
<dbReference type="NCBIfam" id="TIGR00592">
    <property type="entry name" value="pol2"/>
    <property type="match status" value="1"/>
</dbReference>
<dbReference type="PANTHER" id="PTHR10322">
    <property type="entry name" value="DNA POLYMERASE CATALYTIC SUBUNIT"/>
    <property type="match status" value="1"/>
</dbReference>
<dbReference type="PANTHER" id="PTHR10322:SF23">
    <property type="entry name" value="DNA POLYMERASE DELTA CATALYTIC SUBUNIT"/>
    <property type="match status" value="1"/>
</dbReference>
<dbReference type="Pfam" id="PF00136">
    <property type="entry name" value="DNA_pol_B"/>
    <property type="match status" value="1"/>
</dbReference>
<dbReference type="Pfam" id="PF03104">
    <property type="entry name" value="DNA_pol_B_exo1"/>
    <property type="match status" value="1"/>
</dbReference>
<dbReference type="Pfam" id="PF24055">
    <property type="entry name" value="POL3_N"/>
    <property type="match status" value="1"/>
</dbReference>
<dbReference type="Pfam" id="PF14260">
    <property type="entry name" value="zf-C4pol"/>
    <property type="match status" value="1"/>
</dbReference>
<dbReference type="PRINTS" id="PR00106">
    <property type="entry name" value="DNAPOLB"/>
</dbReference>
<dbReference type="SMART" id="SM00486">
    <property type="entry name" value="POLBc"/>
    <property type="match status" value="1"/>
</dbReference>
<dbReference type="SUPFAM" id="SSF56672">
    <property type="entry name" value="DNA/RNA polymerases"/>
    <property type="match status" value="1"/>
</dbReference>
<dbReference type="SUPFAM" id="SSF53098">
    <property type="entry name" value="Ribonuclease H-like"/>
    <property type="match status" value="1"/>
</dbReference>
<dbReference type="PROSITE" id="PS00116">
    <property type="entry name" value="DNA_POLYMERASE_B"/>
    <property type="match status" value="1"/>
</dbReference>